<dbReference type="EMBL" id="CP000800">
    <property type="protein sequence ID" value="ABV17340.1"/>
    <property type="molecule type" value="Genomic_DNA"/>
</dbReference>
<dbReference type="RefSeq" id="WP_000103754.1">
    <property type="nucleotide sequence ID" value="NC_009801.1"/>
</dbReference>
<dbReference type="BMRB" id="A7ZKJ7"/>
<dbReference type="SMR" id="A7ZKJ7"/>
<dbReference type="GeneID" id="98387866"/>
<dbReference type="KEGG" id="ecw:EcE24377A_1215"/>
<dbReference type="HOGENOM" id="CLU_108696_5_1_6"/>
<dbReference type="UniPathway" id="UPA00094"/>
<dbReference type="Proteomes" id="UP000001122">
    <property type="component" value="Chromosome"/>
</dbReference>
<dbReference type="GO" id="GO:0005829">
    <property type="term" value="C:cytosol"/>
    <property type="evidence" value="ECO:0007669"/>
    <property type="project" value="TreeGrafter"/>
</dbReference>
<dbReference type="GO" id="GO:0016020">
    <property type="term" value="C:membrane"/>
    <property type="evidence" value="ECO:0007669"/>
    <property type="project" value="GOC"/>
</dbReference>
<dbReference type="GO" id="GO:0000035">
    <property type="term" value="F:acyl binding"/>
    <property type="evidence" value="ECO:0007669"/>
    <property type="project" value="TreeGrafter"/>
</dbReference>
<dbReference type="GO" id="GO:0000036">
    <property type="term" value="F:acyl carrier activity"/>
    <property type="evidence" value="ECO:0007669"/>
    <property type="project" value="UniProtKB-UniRule"/>
</dbReference>
<dbReference type="GO" id="GO:0009245">
    <property type="term" value="P:lipid A biosynthetic process"/>
    <property type="evidence" value="ECO:0007669"/>
    <property type="project" value="TreeGrafter"/>
</dbReference>
<dbReference type="FunFam" id="1.10.1200.10:FF:000001">
    <property type="entry name" value="Acyl carrier protein"/>
    <property type="match status" value="1"/>
</dbReference>
<dbReference type="Gene3D" id="1.10.1200.10">
    <property type="entry name" value="ACP-like"/>
    <property type="match status" value="1"/>
</dbReference>
<dbReference type="HAMAP" id="MF_01217">
    <property type="entry name" value="Acyl_carrier"/>
    <property type="match status" value="1"/>
</dbReference>
<dbReference type="InterPro" id="IPR003231">
    <property type="entry name" value="ACP"/>
</dbReference>
<dbReference type="InterPro" id="IPR036736">
    <property type="entry name" value="ACP-like_sf"/>
</dbReference>
<dbReference type="InterPro" id="IPR009081">
    <property type="entry name" value="PP-bd_ACP"/>
</dbReference>
<dbReference type="InterPro" id="IPR006162">
    <property type="entry name" value="Ppantetheine_attach_site"/>
</dbReference>
<dbReference type="NCBIfam" id="TIGR00517">
    <property type="entry name" value="acyl_carrier"/>
    <property type="match status" value="1"/>
</dbReference>
<dbReference type="NCBIfam" id="NF002148">
    <property type="entry name" value="PRK00982.1-2"/>
    <property type="match status" value="1"/>
</dbReference>
<dbReference type="NCBIfam" id="NF002149">
    <property type="entry name" value="PRK00982.1-3"/>
    <property type="match status" value="1"/>
</dbReference>
<dbReference type="NCBIfam" id="NF002150">
    <property type="entry name" value="PRK00982.1-4"/>
    <property type="match status" value="1"/>
</dbReference>
<dbReference type="NCBIfam" id="NF002151">
    <property type="entry name" value="PRK00982.1-5"/>
    <property type="match status" value="1"/>
</dbReference>
<dbReference type="PANTHER" id="PTHR20863">
    <property type="entry name" value="ACYL CARRIER PROTEIN"/>
    <property type="match status" value="1"/>
</dbReference>
<dbReference type="PANTHER" id="PTHR20863:SF76">
    <property type="entry name" value="CARRIER DOMAIN-CONTAINING PROTEIN"/>
    <property type="match status" value="1"/>
</dbReference>
<dbReference type="Pfam" id="PF00550">
    <property type="entry name" value="PP-binding"/>
    <property type="match status" value="1"/>
</dbReference>
<dbReference type="SUPFAM" id="SSF47336">
    <property type="entry name" value="ACP-like"/>
    <property type="match status" value="1"/>
</dbReference>
<dbReference type="PROSITE" id="PS50075">
    <property type="entry name" value="CARRIER"/>
    <property type="match status" value="1"/>
</dbReference>
<dbReference type="PROSITE" id="PS00012">
    <property type="entry name" value="PHOSPHOPANTETHEINE"/>
    <property type="match status" value="1"/>
</dbReference>
<protein>
    <recommendedName>
        <fullName evidence="1">Acyl carrier protein</fullName>
        <shortName evidence="1">ACP</shortName>
    </recommendedName>
</protein>
<reference key="1">
    <citation type="journal article" date="2008" name="J. Bacteriol.">
        <title>The pangenome structure of Escherichia coli: comparative genomic analysis of E. coli commensal and pathogenic isolates.</title>
        <authorList>
            <person name="Rasko D.A."/>
            <person name="Rosovitz M.J."/>
            <person name="Myers G.S.A."/>
            <person name="Mongodin E.F."/>
            <person name="Fricke W.F."/>
            <person name="Gajer P."/>
            <person name="Crabtree J."/>
            <person name="Sebaihia M."/>
            <person name="Thomson N.R."/>
            <person name="Chaudhuri R."/>
            <person name="Henderson I.R."/>
            <person name="Sperandio V."/>
            <person name="Ravel J."/>
        </authorList>
    </citation>
    <scope>NUCLEOTIDE SEQUENCE [LARGE SCALE GENOMIC DNA]</scope>
    <source>
        <strain>E24377A / ETEC</strain>
    </source>
</reference>
<name>ACP_ECO24</name>
<comment type="function">
    <text evidence="1">Carrier of the growing fatty acid chain in fatty acid biosynthesis.</text>
</comment>
<comment type="pathway">
    <text evidence="1">Lipid metabolism; fatty acid biosynthesis.</text>
</comment>
<comment type="subcellular location">
    <subcellularLocation>
        <location evidence="1">Cytoplasm</location>
    </subcellularLocation>
</comment>
<comment type="PTM">
    <text evidence="1">4'-phosphopantetheine is transferred from CoA to a specific serine of apo-ACP by AcpS. This modification is essential for activity because fatty acids are bound in thioester linkage to the sulfhydryl of the prosthetic group.</text>
</comment>
<comment type="similarity">
    <text evidence="1">Belongs to the acyl carrier protein (ACP) family.</text>
</comment>
<keyword id="KW-0963">Cytoplasm</keyword>
<keyword id="KW-0275">Fatty acid biosynthesis</keyword>
<keyword id="KW-0276">Fatty acid metabolism</keyword>
<keyword id="KW-0444">Lipid biosynthesis</keyword>
<keyword id="KW-0443">Lipid metabolism</keyword>
<keyword id="KW-0596">Phosphopantetheine</keyword>
<keyword id="KW-0597">Phosphoprotein</keyword>
<keyword id="KW-1185">Reference proteome</keyword>
<sequence length="78" mass="8640">MSTIEERVKKIIGEQLGVKQEEVTNNASFVEDLGADSLDTVELVMALEEEFDTEIPDEEAEKITTVQAAIDYINGHQA</sequence>
<gene>
    <name evidence="1" type="primary">acpP</name>
    <name type="ordered locus">EcE24377A_1215</name>
</gene>
<feature type="chain" id="PRO_1000066605" description="Acyl carrier protein">
    <location>
        <begin position="1"/>
        <end position="78"/>
    </location>
</feature>
<feature type="domain" description="Carrier" evidence="2">
    <location>
        <begin position="2"/>
        <end position="77"/>
    </location>
</feature>
<feature type="modified residue" description="O-(pantetheine 4'-phosphoryl)serine" evidence="2">
    <location>
        <position position="37"/>
    </location>
</feature>
<organism>
    <name type="scientific">Escherichia coli O139:H28 (strain E24377A / ETEC)</name>
    <dbReference type="NCBI Taxonomy" id="331111"/>
    <lineage>
        <taxon>Bacteria</taxon>
        <taxon>Pseudomonadati</taxon>
        <taxon>Pseudomonadota</taxon>
        <taxon>Gammaproteobacteria</taxon>
        <taxon>Enterobacterales</taxon>
        <taxon>Enterobacteriaceae</taxon>
        <taxon>Escherichia</taxon>
    </lineage>
</organism>
<evidence type="ECO:0000255" key="1">
    <source>
        <dbReference type="HAMAP-Rule" id="MF_01217"/>
    </source>
</evidence>
<evidence type="ECO:0000255" key="2">
    <source>
        <dbReference type="PROSITE-ProRule" id="PRU00258"/>
    </source>
</evidence>
<accession>A7ZKJ7</accession>
<proteinExistence type="inferred from homology"/>